<organism>
    <name type="scientific">Lactuca sativa</name>
    <name type="common">Garden lettuce</name>
    <dbReference type="NCBI Taxonomy" id="4236"/>
    <lineage>
        <taxon>Eukaryota</taxon>
        <taxon>Viridiplantae</taxon>
        <taxon>Streptophyta</taxon>
        <taxon>Embryophyta</taxon>
        <taxon>Tracheophyta</taxon>
        <taxon>Spermatophyta</taxon>
        <taxon>Magnoliopsida</taxon>
        <taxon>eudicotyledons</taxon>
        <taxon>Gunneridae</taxon>
        <taxon>Pentapetalae</taxon>
        <taxon>asterids</taxon>
        <taxon>campanulids</taxon>
        <taxon>Asterales</taxon>
        <taxon>Asteraceae</taxon>
        <taxon>Cichorioideae</taxon>
        <taxon>Cichorieae</taxon>
        <taxon>Lactucinae</taxon>
        <taxon>Lactuca</taxon>
    </lineage>
</organism>
<gene>
    <name evidence="1" type="primary">psbN</name>
</gene>
<reference key="1">
    <citation type="journal article" date="2006" name="Transgenic Res.">
        <title>Efficient and stable transformation of Lactuca sativa L. cv. Cisco (lettuce) plastids.</title>
        <authorList>
            <person name="Kanamoto H."/>
            <person name="Yamashita A."/>
            <person name="Asao H."/>
            <person name="Okumura S."/>
            <person name="Takase H."/>
            <person name="Hattori M."/>
            <person name="Yokota A."/>
            <person name="Tomizawa K."/>
        </authorList>
    </citation>
    <scope>NUCLEOTIDE SEQUENCE [LARGE SCALE GENOMIC DNA]</scope>
    <source>
        <strain>cv. Cisco</strain>
    </source>
</reference>
<reference key="2">
    <citation type="submission" date="2006-01" db="EMBL/GenBank/DDBJ databases">
        <title>A comparison of the first two published chloroplast genomes in Asteraceae: Lactuca and Helianthus.</title>
        <authorList>
            <person name="Timme R.E."/>
            <person name="Kuehl J.V."/>
            <person name="Boore J.L."/>
            <person name="Jansen R.K."/>
        </authorList>
    </citation>
    <scope>NUCLEOTIDE SEQUENCE [LARGE SCALE GENOMIC DNA]</scope>
    <source>
        <strain>cv. Salinas</strain>
    </source>
</reference>
<accession>Q332U9</accession>
<accession>Q1KXJ4</accession>
<proteinExistence type="inferred from homology"/>
<evidence type="ECO:0000255" key="1">
    <source>
        <dbReference type="HAMAP-Rule" id="MF_00293"/>
    </source>
</evidence>
<feature type="chain" id="PRO_0000232773" description="Protein PsbN">
    <location>
        <begin position="1"/>
        <end position="43"/>
    </location>
</feature>
<feature type="transmembrane region" description="Helical" evidence="1">
    <location>
        <begin position="7"/>
        <end position="27"/>
    </location>
</feature>
<comment type="function">
    <text evidence="1">May play a role in photosystem I and II biogenesis.</text>
</comment>
<comment type="subcellular location">
    <subcellularLocation>
        <location evidence="1">Plastid</location>
        <location evidence="1">Chloroplast thylakoid membrane</location>
        <topology evidence="1">Single-pass membrane protein</topology>
    </subcellularLocation>
</comment>
<comment type="similarity">
    <text evidence="1">Belongs to the PsbN family.</text>
</comment>
<comment type="caution">
    <text evidence="1">Originally thought to be a component of PSII; based on experiments in Synechocystis, N.tabacum and barley, and its absence from PSII in T.elongatus and T.vulcanus, this is probably not true.</text>
</comment>
<dbReference type="EMBL" id="AP007232">
    <property type="protein sequence ID" value="BAE47623.1"/>
    <property type="molecule type" value="Genomic_DNA"/>
</dbReference>
<dbReference type="EMBL" id="DQ383816">
    <property type="protein sequence ID" value="ABD47260.1"/>
    <property type="molecule type" value="Genomic_DNA"/>
</dbReference>
<dbReference type="RefSeq" id="YP_398356.1">
    <property type="nucleotide sequence ID" value="NC_007578.1"/>
</dbReference>
<dbReference type="SMR" id="Q332U9"/>
<dbReference type="GeneID" id="3772846"/>
<dbReference type="KEGG" id="lsv:3772846"/>
<dbReference type="OrthoDB" id="1860403at2759"/>
<dbReference type="GO" id="GO:0009535">
    <property type="term" value="C:chloroplast thylakoid membrane"/>
    <property type="evidence" value="ECO:0007669"/>
    <property type="project" value="UniProtKB-SubCell"/>
</dbReference>
<dbReference type="GO" id="GO:0015979">
    <property type="term" value="P:photosynthesis"/>
    <property type="evidence" value="ECO:0007669"/>
    <property type="project" value="InterPro"/>
</dbReference>
<dbReference type="HAMAP" id="MF_00293">
    <property type="entry name" value="PSII_PsbN"/>
    <property type="match status" value="1"/>
</dbReference>
<dbReference type="InterPro" id="IPR003398">
    <property type="entry name" value="PSII_PsbN"/>
</dbReference>
<dbReference type="PANTHER" id="PTHR35326">
    <property type="entry name" value="PROTEIN PSBN"/>
    <property type="match status" value="1"/>
</dbReference>
<dbReference type="PANTHER" id="PTHR35326:SF3">
    <property type="entry name" value="PROTEIN PSBN"/>
    <property type="match status" value="1"/>
</dbReference>
<dbReference type="Pfam" id="PF02468">
    <property type="entry name" value="PsbN"/>
    <property type="match status" value="1"/>
</dbReference>
<sequence length="43" mass="4722">METATLVAIFISGLLVSFTGYALYTAFGQPSQQLRDPFEEHGD</sequence>
<geneLocation type="chloroplast"/>
<keyword id="KW-0150">Chloroplast</keyword>
<keyword id="KW-0472">Membrane</keyword>
<keyword id="KW-0934">Plastid</keyword>
<keyword id="KW-0793">Thylakoid</keyword>
<keyword id="KW-0812">Transmembrane</keyword>
<keyword id="KW-1133">Transmembrane helix</keyword>
<protein>
    <recommendedName>
        <fullName evidence="1">Protein PsbN</fullName>
    </recommendedName>
</protein>
<name>PSBN_LACSA</name>